<sequence>MNTTRDANRLRQRASLSGLALAGSLGLAGCGVLGLAGCGGDNNSSTSGNVKPSFVGTVTVTRHDGANDDLLTAGLGAAGLASASAPSVATPTAPTAAELRRLDIYASYRALVDTAANGGYGTLYGPSVDVNGNATSGSGMVPGVEYIAYSDDGTGQQNVVLLVQIPDAFDPANPCIITATSSGSRGIYGAISTGEWGLKHKCAVAYTDKGTGAGPHDLATDTVPLQDGTRTTRLAAGRTAQFAAPLTDSQLAAFNAATPNRLAFKHAHSQRNPEKDWGLFTLQAVQFAFWAINDKLGAAGMPAGSPLPVRRDNTIVIASSISNGGGAAIAAAEQDTAGWIDGVAVGEPGLNLPPSANVQVARGGVTLPVSGKPLFDYVSYANLFRLCAASSSGVSAAPTQAFFAGAVGWPASVQANRCAALRANGLLSSATAAAQADEALQKLHAFGWEPESDLVHASMSYFEIDPSVAVTFGNALARASVLDNLCNFSFAAVDSAFHPTAVNATSLAQMAALGNGIPPTSGVQLINNLAQGGPTQSKQSVDGSGALAANLDGALCLRNLLTGGDAASLALQAGIAQTLRTGNLHGKPALIVQGRNDALLPVNHGARPYLGLNAQTDSSSRLSYIEVMNAQHFDGFIDLVPGYDTLFVPLVLYEQRALDAVFANLKNGTPLPPSQVVRTTPRGGTAGAAPAITAANVPNFTMTPAAGDRIGVSVSGGVATVSVPN</sequence>
<reference key="1">
    <citation type="journal article" date="2002" name="Nature">
        <title>Genome sequence of the plant pathogen Ralstonia solanacearum.</title>
        <authorList>
            <person name="Salanoubat M."/>
            <person name="Genin S."/>
            <person name="Artiguenave F."/>
            <person name="Gouzy J."/>
            <person name="Mangenot S."/>
            <person name="Arlat M."/>
            <person name="Billault A."/>
            <person name="Brottier P."/>
            <person name="Camus J.-C."/>
            <person name="Cattolico L."/>
            <person name="Chandler M."/>
            <person name="Choisne N."/>
            <person name="Claudel-Renard C."/>
            <person name="Cunnac S."/>
            <person name="Demange N."/>
            <person name="Gaspin C."/>
            <person name="Lavie M."/>
            <person name="Moisan A."/>
            <person name="Robert C."/>
            <person name="Saurin W."/>
            <person name="Schiex T."/>
            <person name="Siguier P."/>
            <person name="Thebault P."/>
            <person name="Whalen M."/>
            <person name="Wincker P."/>
            <person name="Levy M."/>
            <person name="Weissenbach J."/>
            <person name="Boucher C.A."/>
        </authorList>
    </citation>
    <scope>NUCLEOTIDE SEQUENCE [LARGE SCALE GENOMIC DNA]</scope>
    <source>
        <strain>ATCC BAA-1114 / GMI1000</strain>
    </source>
</reference>
<name>HBOH_RALN1</name>
<evidence type="ECO:0000255" key="1">
    <source>
        <dbReference type="HAMAP-Rule" id="MF_01906"/>
    </source>
</evidence>
<proteinExistence type="inferred from homology"/>
<organism>
    <name type="scientific">Ralstonia nicotianae (strain ATCC BAA-1114 / GMI1000)</name>
    <name type="common">Ralstonia solanacearum</name>
    <dbReference type="NCBI Taxonomy" id="267608"/>
    <lineage>
        <taxon>Bacteria</taxon>
        <taxon>Pseudomonadati</taxon>
        <taxon>Pseudomonadota</taxon>
        <taxon>Betaproteobacteria</taxon>
        <taxon>Burkholderiales</taxon>
        <taxon>Burkholderiaceae</taxon>
        <taxon>Ralstonia</taxon>
        <taxon>Ralstonia solanacearum species complex</taxon>
    </lineage>
</organism>
<gene>
    <name type="ordered locus">RSc1334</name>
</gene>
<accession>Q8XZR1</accession>
<protein>
    <recommendedName>
        <fullName evidence="1">D-(-)-3-hydroxybutyrate oligomer hydrolase</fullName>
        <shortName evidence="1">3HB-oligomer hydrolase</shortName>
        <shortName evidence="1">3HBOH</shortName>
        <ecNumber evidence="1">3.1.1.22</ecNumber>
    </recommendedName>
</protein>
<keyword id="KW-0378">Hydrolase</keyword>
<keyword id="KW-1185">Reference proteome</keyword>
<keyword id="KW-0964">Secreted</keyword>
<keyword id="KW-0732">Signal</keyword>
<feature type="signal peptide" evidence="1">
    <location>
        <begin position="1"/>
        <end position="22"/>
    </location>
</feature>
<feature type="chain" id="PRO_0000314431" description="D-(-)-3-hydroxybutyrate oligomer hydrolase">
    <location>
        <begin position="23"/>
        <end position="725"/>
    </location>
</feature>
<feature type="active site" description="Charge relay system" evidence="1">
    <location>
        <position position="322"/>
    </location>
</feature>
<dbReference type="EC" id="3.1.1.22" evidence="1"/>
<dbReference type="EMBL" id="AL646052">
    <property type="protein sequence ID" value="CAD15036.1"/>
    <property type="molecule type" value="Genomic_DNA"/>
</dbReference>
<dbReference type="RefSeq" id="WP_011001283.1">
    <property type="nucleotide sequence ID" value="NC_003295.1"/>
</dbReference>
<dbReference type="STRING" id="267608.RSc1334"/>
<dbReference type="ESTHER" id="ralso-hboh">
    <property type="family name" value="OHBut_olig_hydro_put"/>
</dbReference>
<dbReference type="EnsemblBacteria" id="CAD15036">
    <property type="protein sequence ID" value="CAD15036"/>
    <property type="gene ID" value="RSc1334"/>
</dbReference>
<dbReference type="KEGG" id="rso:RSc1334"/>
<dbReference type="PATRIC" id="fig|267608.8.peg.1358"/>
<dbReference type="eggNOG" id="ENOG502Z8QU">
    <property type="taxonomic scope" value="Bacteria"/>
</dbReference>
<dbReference type="HOGENOM" id="CLU_420258_0_0_4"/>
<dbReference type="UniPathway" id="UPA00863"/>
<dbReference type="Proteomes" id="UP000001436">
    <property type="component" value="Chromosome"/>
</dbReference>
<dbReference type="GO" id="GO:0005615">
    <property type="term" value="C:extracellular space"/>
    <property type="evidence" value="ECO:0007669"/>
    <property type="project" value="InterPro"/>
</dbReference>
<dbReference type="GO" id="GO:0047989">
    <property type="term" value="F:hydroxybutyrate-dimer hydrolase activity"/>
    <property type="evidence" value="ECO:0007669"/>
    <property type="project" value="UniProtKB-UniRule"/>
</dbReference>
<dbReference type="GO" id="GO:0019605">
    <property type="term" value="P:butyrate metabolic process"/>
    <property type="evidence" value="ECO:0007669"/>
    <property type="project" value="UniProtKB-UniRule"/>
</dbReference>
<dbReference type="HAMAP" id="MF_01906">
    <property type="entry name" value="3HBOH"/>
    <property type="match status" value="1"/>
</dbReference>
<dbReference type="InterPro" id="IPR016582">
    <property type="entry name" value="OHBut_olig_hydro_put"/>
</dbReference>
<dbReference type="Pfam" id="PF10605">
    <property type="entry name" value="3HBOH"/>
    <property type="match status" value="1"/>
</dbReference>
<dbReference type="PIRSF" id="PIRSF011409">
    <property type="entry name" value="HObutyrate_olig_hydrol"/>
    <property type="match status" value="1"/>
</dbReference>
<comment type="function">
    <text evidence="1">Participates in the degradation of poly-3-hydroxybutyrate (PHB). It works downstream of poly(3-hydroxybutyrate) depolymerase, hydrolyzing D(-)-3-hydroxybutyrate oligomers of various length (3HB-oligomers) into 3HB-monomers.</text>
</comment>
<comment type="catalytic activity">
    <reaction evidence="1">
        <text>(3R)-hydroxybutanoate dimer + H2O = 2 (R)-3-hydroxybutanoate + H(+)</text>
        <dbReference type="Rhea" id="RHEA:10172"/>
        <dbReference type="ChEBI" id="CHEBI:10979"/>
        <dbReference type="ChEBI" id="CHEBI:10983"/>
        <dbReference type="ChEBI" id="CHEBI:15377"/>
        <dbReference type="ChEBI" id="CHEBI:15378"/>
        <dbReference type="EC" id="3.1.1.22"/>
    </reaction>
</comment>
<comment type="pathway">
    <text evidence="1">Lipid metabolism; butanoate metabolism.</text>
</comment>
<comment type="subcellular location">
    <subcellularLocation>
        <location evidence="1">Secreted</location>
    </subcellularLocation>
</comment>
<comment type="similarity">
    <text evidence="1">Belongs to the D-(-)-3-hydroxybutyrate oligomer hydrolase family.</text>
</comment>